<proteinExistence type="inferred from homology"/>
<comment type="function">
    <text evidence="1">NDH-1 shuttles electrons from NADH, via FMN and iron-sulfur (Fe-S) centers, to quinones in the respiratory chain. The immediate electron acceptor for the enzyme in this species is believed to be a menaquinone. Couples the redox reaction to proton translocation (for every two electrons transferred, four hydrogen ions are translocated across the cytoplasmic membrane), and thus conserves the redox energy in a proton gradient.</text>
</comment>
<comment type="catalytic activity">
    <reaction evidence="1">
        <text>a quinone + NADH + 5 H(+)(in) = a quinol + NAD(+) + 4 H(+)(out)</text>
        <dbReference type="Rhea" id="RHEA:57888"/>
        <dbReference type="ChEBI" id="CHEBI:15378"/>
        <dbReference type="ChEBI" id="CHEBI:24646"/>
        <dbReference type="ChEBI" id="CHEBI:57540"/>
        <dbReference type="ChEBI" id="CHEBI:57945"/>
        <dbReference type="ChEBI" id="CHEBI:132124"/>
    </reaction>
</comment>
<comment type="subunit">
    <text evidence="1">NDH-1 is composed of 14 different subunits. Subunits NuoA, H, J, K, L, M, N constitute the membrane sector of the complex.</text>
</comment>
<comment type="subcellular location">
    <subcellularLocation>
        <location evidence="1">Cell membrane</location>
        <topology evidence="1">Multi-pass membrane protein</topology>
    </subcellularLocation>
</comment>
<comment type="similarity">
    <text evidence="1">Belongs to the complex I subunit 3 family.</text>
</comment>
<gene>
    <name evidence="1" type="primary">nuoA</name>
    <name type="ordered locus">Dred_2046</name>
</gene>
<name>NUOA_DESRM</name>
<organism>
    <name type="scientific">Desulforamulus reducens (strain ATCC BAA-1160 / DSM 100696 / MI-1)</name>
    <name type="common">Desulfotomaculum reducens</name>
    <dbReference type="NCBI Taxonomy" id="349161"/>
    <lineage>
        <taxon>Bacteria</taxon>
        <taxon>Bacillati</taxon>
        <taxon>Bacillota</taxon>
        <taxon>Clostridia</taxon>
        <taxon>Eubacteriales</taxon>
        <taxon>Peptococcaceae</taxon>
        <taxon>Desulforamulus</taxon>
    </lineage>
</organism>
<dbReference type="EC" id="7.1.1.-" evidence="1"/>
<dbReference type="EMBL" id="CP000612">
    <property type="protein sequence ID" value="ABO50563.1"/>
    <property type="molecule type" value="Genomic_DNA"/>
</dbReference>
<dbReference type="RefSeq" id="WP_011878369.1">
    <property type="nucleotide sequence ID" value="NC_009253.1"/>
</dbReference>
<dbReference type="SMR" id="A4J660"/>
<dbReference type="STRING" id="349161.Dred_2046"/>
<dbReference type="KEGG" id="drm:Dred_2046"/>
<dbReference type="eggNOG" id="COG0838">
    <property type="taxonomic scope" value="Bacteria"/>
</dbReference>
<dbReference type="HOGENOM" id="CLU_119549_1_2_9"/>
<dbReference type="OrthoDB" id="9791970at2"/>
<dbReference type="Proteomes" id="UP000001556">
    <property type="component" value="Chromosome"/>
</dbReference>
<dbReference type="GO" id="GO:0030964">
    <property type="term" value="C:NADH dehydrogenase complex"/>
    <property type="evidence" value="ECO:0007669"/>
    <property type="project" value="TreeGrafter"/>
</dbReference>
<dbReference type="GO" id="GO:0005886">
    <property type="term" value="C:plasma membrane"/>
    <property type="evidence" value="ECO:0007669"/>
    <property type="project" value="UniProtKB-SubCell"/>
</dbReference>
<dbReference type="GO" id="GO:0008137">
    <property type="term" value="F:NADH dehydrogenase (ubiquinone) activity"/>
    <property type="evidence" value="ECO:0007669"/>
    <property type="project" value="InterPro"/>
</dbReference>
<dbReference type="GO" id="GO:0050136">
    <property type="term" value="F:NADH:ubiquinone reductase (non-electrogenic) activity"/>
    <property type="evidence" value="ECO:0007669"/>
    <property type="project" value="UniProtKB-UniRule"/>
</dbReference>
<dbReference type="GO" id="GO:0048038">
    <property type="term" value="F:quinone binding"/>
    <property type="evidence" value="ECO:0007669"/>
    <property type="project" value="UniProtKB-KW"/>
</dbReference>
<dbReference type="Gene3D" id="1.20.58.1610">
    <property type="entry name" value="NADH:ubiquinone/plastoquinone oxidoreductase, chain 3"/>
    <property type="match status" value="1"/>
</dbReference>
<dbReference type="HAMAP" id="MF_01394">
    <property type="entry name" value="NDH1_NuoA"/>
    <property type="match status" value="1"/>
</dbReference>
<dbReference type="InterPro" id="IPR023043">
    <property type="entry name" value="NAD(P)H_OxRDtase_bac/plastid"/>
</dbReference>
<dbReference type="InterPro" id="IPR000440">
    <property type="entry name" value="NADH_UbQ/plastoQ_OxRdtase_su3"/>
</dbReference>
<dbReference type="InterPro" id="IPR038430">
    <property type="entry name" value="NDAH_ubi_oxred_su3_sf"/>
</dbReference>
<dbReference type="PANTHER" id="PTHR11058">
    <property type="entry name" value="NADH-UBIQUINONE OXIDOREDUCTASE CHAIN 3"/>
    <property type="match status" value="1"/>
</dbReference>
<dbReference type="PANTHER" id="PTHR11058:SF9">
    <property type="entry name" value="NADH-UBIQUINONE OXIDOREDUCTASE CHAIN 3"/>
    <property type="match status" value="1"/>
</dbReference>
<dbReference type="Pfam" id="PF00507">
    <property type="entry name" value="Oxidored_q4"/>
    <property type="match status" value="1"/>
</dbReference>
<feature type="chain" id="PRO_0000362673" description="NADH-quinone oxidoreductase subunit A">
    <location>
        <begin position="1"/>
        <end position="117"/>
    </location>
</feature>
<feature type="transmembrane region" description="Helical" evidence="1">
    <location>
        <begin position="4"/>
        <end position="24"/>
    </location>
</feature>
<feature type="transmembrane region" description="Helical" evidence="1">
    <location>
        <begin position="64"/>
        <end position="84"/>
    </location>
</feature>
<feature type="transmembrane region" description="Helical" evidence="1">
    <location>
        <begin position="86"/>
        <end position="106"/>
    </location>
</feature>
<protein>
    <recommendedName>
        <fullName evidence="1">NADH-quinone oxidoreductase subunit A</fullName>
        <ecNumber evidence="1">7.1.1.-</ecNumber>
    </recommendedName>
    <alternativeName>
        <fullName evidence="1">NADH dehydrogenase I subunit A</fullName>
    </alternativeName>
    <alternativeName>
        <fullName evidence="1">NDH-1 subunit A</fullName>
    </alternativeName>
    <alternativeName>
        <fullName evidence="1">NUO1</fullName>
    </alternativeName>
</protein>
<keyword id="KW-1003">Cell membrane</keyword>
<keyword id="KW-0472">Membrane</keyword>
<keyword id="KW-0520">NAD</keyword>
<keyword id="KW-0874">Quinone</keyword>
<keyword id="KW-1185">Reference proteome</keyword>
<keyword id="KW-1278">Translocase</keyword>
<keyword id="KW-0812">Transmembrane</keyword>
<keyword id="KW-1133">Transmembrane helix</keyword>
<keyword id="KW-0813">Transport</keyword>
<sequence length="117" mass="13466">MSDWIGVALFIVVGIVFGAGGMLTSFLIHPRSKNKFKLETYECGLPTEGATWVRFKTQYFTYALMFVIFDVEVIYLYPWAVSFVDLGLAGLIKMFLFIFILVLGLWYAWKEGALEWK</sequence>
<evidence type="ECO:0000255" key="1">
    <source>
        <dbReference type="HAMAP-Rule" id="MF_01394"/>
    </source>
</evidence>
<accession>A4J660</accession>
<reference key="1">
    <citation type="submission" date="2007-03" db="EMBL/GenBank/DDBJ databases">
        <title>Complete sequence of Desulfotomaculum reducens MI-1.</title>
        <authorList>
            <consortium name="US DOE Joint Genome Institute"/>
            <person name="Copeland A."/>
            <person name="Lucas S."/>
            <person name="Lapidus A."/>
            <person name="Barry K."/>
            <person name="Detter J.C."/>
            <person name="Glavina del Rio T."/>
            <person name="Hammon N."/>
            <person name="Israni S."/>
            <person name="Dalin E."/>
            <person name="Tice H."/>
            <person name="Pitluck S."/>
            <person name="Sims D."/>
            <person name="Brettin T."/>
            <person name="Bruce D."/>
            <person name="Han C."/>
            <person name="Tapia R."/>
            <person name="Schmutz J."/>
            <person name="Larimer F."/>
            <person name="Land M."/>
            <person name="Hauser L."/>
            <person name="Kyrpides N."/>
            <person name="Kim E."/>
            <person name="Tebo B.M."/>
            <person name="Richardson P."/>
        </authorList>
    </citation>
    <scope>NUCLEOTIDE SEQUENCE [LARGE SCALE GENOMIC DNA]</scope>
    <source>
        <strain>ATCC BAA-1160 / DSM 100696 / MI-1</strain>
    </source>
</reference>